<organism>
    <name type="scientific">Xanthomonas campestris pv. campestris (strain 8004)</name>
    <dbReference type="NCBI Taxonomy" id="314565"/>
    <lineage>
        <taxon>Bacteria</taxon>
        <taxon>Pseudomonadati</taxon>
        <taxon>Pseudomonadota</taxon>
        <taxon>Gammaproteobacteria</taxon>
        <taxon>Lysobacterales</taxon>
        <taxon>Lysobacteraceae</taxon>
        <taxon>Xanthomonas</taxon>
    </lineage>
</organism>
<feature type="chain" id="PRO_0000352640" description="D-galactonate dehydratase">
    <location>
        <begin position="1"/>
        <end position="382"/>
    </location>
</feature>
<feature type="active site" description="Proton donor" evidence="1">
    <location>
        <position position="185"/>
    </location>
</feature>
<feature type="active site" description="Proton acceptor" evidence="1">
    <location>
        <position position="285"/>
    </location>
</feature>
<feature type="binding site" evidence="2">
    <location>
        <position position="183"/>
    </location>
    <ligand>
        <name>Mg(2+)</name>
        <dbReference type="ChEBI" id="CHEBI:18420"/>
    </ligand>
</feature>
<feature type="binding site" evidence="2">
    <location>
        <position position="209"/>
    </location>
    <ligand>
        <name>Mg(2+)</name>
        <dbReference type="ChEBI" id="CHEBI:18420"/>
    </ligand>
</feature>
<feature type="binding site" evidence="2">
    <location>
        <position position="235"/>
    </location>
    <ligand>
        <name>Mg(2+)</name>
        <dbReference type="ChEBI" id="CHEBI:18420"/>
    </ligand>
</feature>
<feature type="site" description="Increases basicity of active site His" evidence="2">
    <location>
        <position position="258"/>
    </location>
</feature>
<feature type="site" description="Transition state stabilizer" evidence="2">
    <location>
        <position position="310"/>
    </location>
</feature>
<name>DGOD_XANC8</name>
<dbReference type="EC" id="4.2.1.6" evidence="2"/>
<dbReference type="EMBL" id="CP000050">
    <property type="protein sequence ID" value="AAY49538.1"/>
    <property type="molecule type" value="Genomic_DNA"/>
</dbReference>
<dbReference type="RefSeq" id="WP_011036920.1">
    <property type="nucleotide sequence ID" value="NZ_CP155948.1"/>
</dbReference>
<dbReference type="SMR" id="Q4UTT5"/>
<dbReference type="GeneID" id="58013700"/>
<dbReference type="KEGG" id="xcb:XC_2488"/>
<dbReference type="HOGENOM" id="CLU_030273_3_2_6"/>
<dbReference type="UniPathway" id="UPA00081">
    <property type="reaction ID" value="UER00518"/>
</dbReference>
<dbReference type="Proteomes" id="UP000000420">
    <property type="component" value="Chromosome"/>
</dbReference>
<dbReference type="GO" id="GO:0008869">
    <property type="term" value="F:galactonate dehydratase activity"/>
    <property type="evidence" value="ECO:0007669"/>
    <property type="project" value="UniProtKB-UniRule"/>
</dbReference>
<dbReference type="GO" id="GO:0000287">
    <property type="term" value="F:magnesium ion binding"/>
    <property type="evidence" value="ECO:0007669"/>
    <property type="project" value="UniProtKB-UniRule"/>
</dbReference>
<dbReference type="GO" id="GO:0009063">
    <property type="term" value="P:amino acid catabolic process"/>
    <property type="evidence" value="ECO:0007669"/>
    <property type="project" value="InterPro"/>
</dbReference>
<dbReference type="GO" id="GO:0034194">
    <property type="term" value="P:D-galactonate catabolic process"/>
    <property type="evidence" value="ECO:0007669"/>
    <property type="project" value="UniProtKB-UniRule"/>
</dbReference>
<dbReference type="CDD" id="cd03325">
    <property type="entry name" value="D-galactonate_dehydratase"/>
    <property type="match status" value="1"/>
</dbReference>
<dbReference type="FunFam" id="3.30.390.10:FF:000003">
    <property type="entry name" value="D-galactonate dehydratase"/>
    <property type="match status" value="1"/>
</dbReference>
<dbReference type="Gene3D" id="3.20.20.120">
    <property type="entry name" value="Enolase-like C-terminal domain"/>
    <property type="match status" value="1"/>
</dbReference>
<dbReference type="Gene3D" id="3.30.390.10">
    <property type="entry name" value="Enolase-like, N-terminal domain"/>
    <property type="match status" value="1"/>
</dbReference>
<dbReference type="HAMAP" id="MF_01289">
    <property type="entry name" value="Galacton_dehydrat"/>
    <property type="match status" value="1"/>
</dbReference>
<dbReference type="InterPro" id="IPR034593">
    <property type="entry name" value="DgoD-like"/>
</dbReference>
<dbReference type="InterPro" id="IPR036849">
    <property type="entry name" value="Enolase-like_C_sf"/>
</dbReference>
<dbReference type="InterPro" id="IPR029017">
    <property type="entry name" value="Enolase-like_N"/>
</dbReference>
<dbReference type="InterPro" id="IPR029065">
    <property type="entry name" value="Enolase_C-like"/>
</dbReference>
<dbReference type="InterPro" id="IPR023592">
    <property type="entry name" value="Galactonate_deHydtase"/>
</dbReference>
<dbReference type="InterPro" id="IPR018110">
    <property type="entry name" value="Mandel_Rmase/mucon_lact_enz_CS"/>
</dbReference>
<dbReference type="InterPro" id="IPR013342">
    <property type="entry name" value="Mandelate_racemase_C"/>
</dbReference>
<dbReference type="InterPro" id="IPR013341">
    <property type="entry name" value="Mandelate_racemase_N_dom"/>
</dbReference>
<dbReference type="NCBIfam" id="NF010624">
    <property type="entry name" value="PRK14017.1"/>
    <property type="match status" value="1"/>
</dbReference>
<dbReference type="PANTHER" id="PTHR48080:SF2">
    <property type="entry name" value="D-GALACTONATE DEHYDRATASE"/>
    <property type="match status" value="1"/>
</dbReference>
<dbReference type="PANTHER" id="PTHR48080">
    <property type="entry name" value="D-GALACTONATE DEHYDRATASE-RELATED"/>
    <property type="match status" value="1"/>
</dbReference>
<dbReference type="Pfam" id="PF13378">
    <property type="entry name" value="MR_MLE_C"/>
    <property type="match status" value="1"/>
</dbReference>
<dbReference type="Pfam" id="PF02746">
    <property type="entry name" value="MR_MLE_N"/>
    <property type="match status" value="1"/>
</dbReference>
<dbReference type="SFLD" id="SFLDF00003">
    <property type="entry name" value="D-galactonate_dehydratase"/>
    <property type="match status" value="1"/>
</dbReference>
<dbReference type="SFLD" id="SFLDS00001">
    <property type="entry name" value="Enolase"/>
    <property type="match status" value="1"/>
</dbReference>
<dbReference type="SMART" id="SM00922">
    <property type="entry name" value="MR_MLE"/>
    <property type="match status" value="1"/>
</dbReference>
<dbReference type="SUPFAM" id="SSF51604">
    <property type="entry name" value="Enolase C-terminal domain-like"/>
    <property type="match status" value="1"/>
</dbReference>
<dbReference type="SUPFAM" id="SSF54826">
    <property type="entry name" value="Enolase N-terminal domain-like"/>
    <property type="match status" value="1"/>
</dbReference>
<dbReference type="PROSITE" id="PS00908">
    <property type="entry name" value="MR_MLE_1"/>
    <property type="match status" value="1"/>
</dbReference>
<dbReference type="PROSITE" id="PS00909">
    <property type="entry name" value="MR_MLE_2"/>
    <property type="match status" value="1"/>
</dbReference>
<comment type="function">
    <text evidence="2">Catalyzes the dehydration of D-galactonate to 2-keto-3-deoxy-D-galactonate.</text>
</comment>
<comment type="catalytic activity">
    <reaction evidence="2">
        <text>D-galactonate = 2-dehydro-3-deoxy-D-galactonate + H2O</text>
        <dbReference type="Rhea" id="RHEA:18649"/>
        <dbReference type="ChEBI" id="CHEBI:12931"/>
        <dbReference type="ChEBI" id="CHEBI:15377"/>
        <dbReference type="ChEBI" id="CHEBI:57989"/>
        <dbReference type="EC" id="4.2.1.6"/>
    </reaction>
</comment>
<comment type="cofactor">
    <cofactor evidence="2">
        <name>Mg(2+)</name>
        <dbReference type="ChEBI" id="CHEBI:18420"/>
    </cofactor>
    <text evidence="2">Binds 1 Mg(2+) ion per subunit.</text>
</comment>
<comment type="pathway">
    <text evidence="2">Carbohydrate acid metabolism; D-galactonate degradation; D-glyceraldehyde 3-phosphate and pyruvate from D-galactonate: step 1/3.</text>
</comment>
<comment type="miscellaneous">
    <text evidence="2">Reaction proceeds via an anti dehydration.</text>
</comment>
<comment type="similarity">
    <text evidence="2">Belongs to the mandelate racemase/muconate lactonizing enzyme family. GalD subfamily.</text>
</comment>
<reference key="1">
    <citation type="journal article" date="2005" name="Genome Res.">
        <title>Comparative and functional genomic analyses of the pathogenicity of phytopathogen Xanthomonas campestris pv. campestris.</title>
        <authorList>
            <person name="Qian W."/>
            <person name="Jia Y."/>
            <person name="Ren S.-X."/>
            <person name="He Y.-Q."/>
            <person name="Feng J.-X."/>
            <person name="Lu L.-F."/>
            <person name="Sun Q."/>
            <person name="Ying G."/>
            <person name="Tang D.-J."/>
            <person name="Tang H."/>
            <person name="Wu W."/>
            <person name="Hao P."/>
            <person name="Wang L."/>
            <person name="Jiang B.-L."/>
            <person name="Zeng S."/>
            <person name="Gu W.-Y."/>
            <person name="Lu G."/>
            <person name="Rong L."/>
            <person name="Tian Y."/>
            <person name="Yao Z."/>
            <person name="Fu G."/>
            <person name="Chen B."/>
            <person name="Fang R."/>
            <person name="Qiang B."/>
            <person name="Chen Z."/>
            <person name="Zhao G.-P."/>
            <person name="Tang J.-L."/>
            <person name="He C."/>
        </authorList>
    </citation>
    <scope>NUCLEOTIDE SEQUENCE [LARGE SCALE GENOMIC DNA]</scope>
    <source>
        <strain>8004</strain>
    </source>
</reference>
<accession>Q4UTT5</accession>
<proteinExistence type="inferred from homology"/>
<sequence>MKITRLTTYHAAPRWLFLKVETDEGITGWGEPVIEGRARSVEAAVHELAGYVVGKDPARINDLWQTMYRAGFYRGGAILMSAIAGIDQALWDIKGKALGVPVYELLGGLVRDRMKTYRWVGGDRPGAIIAQINDYRALGFDTFKFNGTEEMKLIDSARAVDAAVVKVAEIRETFGNSIDFGIDFHGRVGAPMAKALLRELEPFKPLFVEEPVLAEQAEYYPRLAASTCIPLAAGERMFSRFEFKNVLCAGGIGMVQPDLSHAGGITECVKIAAMAEAYDVGFAPHCPLGPIALAACLHVDFVSHNAVLQEQSIGIHYNEGADLLDYVINKEDFHCVDGSIAALPKPGLGVEINEDMLKRANENPPDWRNPVWRHADGSIAEW</sequence>
<evidence type="ECO:0000250" key="1"/>
<evidence type="ECO:0000255" key="2">
    <source>
        <dbReference type="HAMAP-Rule" id="MF_01289"/>
    </source>
</evidence>
<protein>
    <recommendedName>
        <fullName evidence="2">D-galactonate dehydratase</fullName>
        <shortName evidence="2">GalD</shortName>
        <ecNumber evidence="2">4.2.1.6</ecNumber>
    </recommendedName>
</protein>
<gene>
    <name evidence="2" type="primary">dgoD</name>
    <name type="ordered locus">XC_2488</name>
</gene>
<keyword id="KW-0456">Lyase</keyword>
<keyword id="KW-0460">Magnesium</keyword>
<keyword id="KW-0479">Metal-binding</keyword>